<feature type="chain" id="PRO_0000096894" description="Protein N-terminal and lysine N-methyltransferase EFM7">
    <location>
        <begin position="1"/>
        <end position="254"/>
    </location>
</feature>
<feature type="binding site" evidence="1">
    <location>
        <position position="57"/>
    </location>
    <ligand>
        <name>S-adenosyl-L-methionine</name>
        <dbReference type="ChEBI" id="CHEBI:59789"/>
    </ligand>
</feature>
<feature type="binding site" evidence="1">
    <location>
        <begin position="84"/>
        <end position="86"/>
    </location>
    <ligand>
        <name>S-adenosyl-L-methionine</name>
        <dbReference type="ChEBI" id="CHEBI:59789"/>
    </ligand>
</feature>
<feature type="binding site" evidence="1">
    <location>
        <position position="106"/>
    </location>
    <ligand>
        <name>S-adenosyl-L-methionine</name>
        <dbReference type="ChEBI" id="CHEBI:59789"/>
    </ligand>
</feature>
<feature type="binding site" evidence="1">
    <location>
        <position position="138"/>
    </location>
    <ligand>
        <name>S-adenosyl-L-methionine</name>
        <dbReference type="ChEBI" id="CHEBI:59789"/>
    </ligand>
</feature>
<feature type="binding site" evidence="1">
    <location>
        <position position="165"/>
    </location>
    <ligand>
        <name>S-adenosyl-L-methionine</name>
        <dbReference type="ChEBI" id="CHEBI:59789"/>
    </ligand>
</feature>
<organism>
    <name type="scientific">Debaryomyces hansenii (strain ATCC 36239 / CBS 767 / BCRC 21394 / JCM 1990 / NBRC 0083 / IGC 2968)</name>
    <name type="common">Yeast</name>
    <name type="synonym">Torulaspora hansenii</name>
    <dbReference type="NCBI Taxonomy" id="284592"/>
    <lineage>
        <taxon>Eukaryota</taxon>
        <taxon>Fungi</taxon>
        <taxon>Dikarya</taxon>
        <taxon>Ascomycota</taxon>
        <taxon>Saccharomycotina</taxon>
        <taxon>Pichiomycetes</taxon>
        <taxon>Debaryomycetaceae</taxon>
        <taxon>Debaryomyces</taxon>
    </lineage>
</organism>
<name>EFM7_DEBHA</name>
<gene>
    <name evidence="1" type="primary">EFM7</name>
    <name type="synonym">NNT1</name>
    <name type="ordered locus">DEHA2F21604g</name>
</gene>
<dbReference type="EC" id="2.1.1.-" evidence="1"/>
<dbReference type="EMBL" id="CR382138">
    <property type="protein sequence ID" value="CAG89682.1"/>
    <property type="molecule type" value="Genomic_DNA"/>
</dbReference>
<dbReference type="RefSeq" id="XP_461283.1">
    <property type="nucleotide sequence ID" value="XM_461283.1"/>
</dbReference>
<dbReference type="SMR" id="Q6BKI8"/>
<dbReference type="FunCoup" id="Q6BKI8">
    <property type="interactions" value="148"/>
</dbReference>
<dbReference type="STRING" id="284592.Q6BKI8"/>
<dbReference type="GeneID" id="2903085"/>
<dbReference type="KEGG" id="dha:DEHA2F21604g"/>
<dbReference type="VEuPathDB" id="FungiDB:DEHA2F21604g"/>
<dbReference type="eggNOG" id="KOG2920">
    <property type="taxonomic scope" value="Eukaryota"/>
</dbReference>
<dbReference type="HOGENOM" id="CLU_032409_0_0_1"/>
<dbReference type="InParanoid" id="Q6BKI8"/>
<dbReference type="OMA" id="VGHNPLW"/>
<dbReference type="OrthoDB" id="46564at2759"/>
<dbReference type="Proteomes" id="UP000000599">
    <property type="component" value="Chromosome F"/>
</dbReference>
<dbReference type="GO" id="GO:0005737">
    <property type="term" value="C:cytoplasm"/>
    <property type="evidence" value="ECO:0007669"/>
    <property type="project" value="UniProtKB-SubCell"/>
</dbReference>
<dbReference type="GO" id="GO:0071885">
    <property type="term" value="F:N-terminal protein N-methyltransferase activity"/>
    <property type="evidence" value="ECO:0007669"/>
    <property type="project" value="UniProtKB-UniRule"/>
</dbReference>
<dbReference type="GO" id="GO:0016279">
    <property type="term" value="F:protein-lysine N-methyltransferase activity"/>
    <property type="evidence" value="ECO:0007669"/>
    <property type="project" value="UniProtKB-UniRule"/>
</dbReference>
<dbReference type="GO" id="GO:0032259">
    <property type="term" value="P:methylation"/>
    <property type="evidence" value="ECO:0007669"/>
    <property type="project" value="UniProtKB-KW"/>
</dbReference>
<dbReference type="GO" id="GO:0000183">
    <property type="term" value="P:rDNA heterochromatin formation"/>
    <property type="evidence" value="ECO:0007669"/>
    <property type="project" value="EnsemblFungi"/>
</dbReference>
<dbReference type="CDD" id="cd02440">
    <property type="entry name" value="AdoMet_MTases"/>
    <property type="match status" value="1"/>
</dbReference>
<dbReference type="Gene3D" id="3.40.50.150">
    <property type="entry name" value="Vaccinia Virus protein VP39"/>
    <property type="match status" value="1"/>
</dbReference>
<dbReference type="HAMAP" id="MF_03223">
    <property type="entry name" value="Methyltr_EFM7"/>
    <property type="match status" value="1"/>
</dbReference>
<dbReference type="InterPro" id="IPR025784">
    <property type="entry name" value="EFM7"/>
</dbReference>
<dbReference type="InterPro" id="IPR019410">
    <property type="entry name" value="Methyltransf_16"/>
</dbReference>
<dbReference type="InterPro" id="IPR029063">
    <property type="entry name" value="SAM-dependent_MTases_sf"/>
</dbReference>
<dbReference type="PANTHER" id="PTHR14614">
    <property type="entry name" value="HEPATOCELLULAR CARCINOMA-ASSOCIATED ANTIGEN"/>
    <property type="match status" value="1"/>
</dbReference>
<dbReference type="PANTHER" id="PTHR14614:SF10">
    <property type="entry name" value="PROTEIN N-TERMINAL AND LYSINE N-METHYLTRANSFERASE EFM7"/>
    <property type="match status" value="1"/>
</dbReference>
<dbReference type="Pfam" id="PF10294">
    <property type="entry name" value="Methyltransf_16"/>
    <property type="match status" value="1"/>
</dbReference>
<dbReference type="SUPFAM" id="SSF53335">
    <property type="entry name" value="S-adenosyl-L-methionine-dependent methyltransferases"/>
    <property type="match status" value="1"/>
</dbReference>
<dbReference type="PROSITE" id="PS51560">
    <property type="entry name" value="SAM_MT_NNT1"/>
    <property type="match status" value="1"/>
</dbReference>
<sequence length="254" mass="28982">MSDDEFIDTGLFAEPEGFTPPPPPPHFAKYQRKNKTDPAELNLRLVGKSPLWGHLLWNAGVFTADYLDKHADELVTGKDVLELGAAAGLPSLICGINKCNRVVCTDYPDPDLISNIQHNFDHCQGLDLSKTVVKGFIWGADAKPLMDDSEKEIQNEDKFDLVILSDLVFNHTEHLKLLKTCRDTVKKNGKCLVVFSPHRPKLLENDLEFFRTCEDFQFKAEKIDLVTWKPMFEEDDESIDIRARVYSFFLVPQW</sequence>
<proteinExistence type="inferred from homology"/>
<reference key="1">
    <citation type="journal article" date="2004" name="Nature">
        <title>Genome evolution in yeasts.</title>
        <authorList>
            <person name="Dujon B."/>
            <person name="Sherman D."/>
            <person name="Fischer G."/>
            <person name="Durrens P."/>
            <person name="Casaregola S."/>
            <person name="Lafontaine I."/>
            <person name="de Montigny J."/>
            <person name="Marck C."/>
            <person name="Neuveglise C."/>
            <person name="Talla E."/>
            <person name="Goffard N."/>
            <person name="Frangeul L."/>
            <person name="Aigle M."/>
            <person name="Anthouard V."/>
            <person name="Babour A."/>
            <person name="Barbe V."/>
            <person name="Barnay S."/>
            <person name="Blanchin S."/>
            <person name="Beckerich J.-M."/>
            <person name="Beyne E."/>
            <person name="Bleykasten C."/>
            <person name="Boisrame A."/>
            <person name="Boyer J."/>
            <person name="Cattolico L."/>
            <person name="Confanioleri F."/>
            <person name="de Daruvar A."/>
            <person name="Despons L."/>
            <person name="Fabre E."/>
            <person name="Fairhead C."/>
            <person name="Ferry-Dumazet H."/>
            <person name="Groppi A."/>
            <person name="Hantraye F."/>
            <person name="Hennequin C."/>
            <person name="Jauniaux N."/>
            <person name="Joyet P."/>
            <person name="Kachouri R."/>
            <person name="Kerrest A."/>
            <person name="Koszul R."/>
            <person name="Lemaire M."/>
            <person name="Lesur I."/>
            <person name="Ma L."/>
            <person name="Muller H."/>
            <person name="Nicaud J.-M."/>
            <person name="Nikolski M."/>
            <person name="Oztas S."/>
            <person name="Ozier-Kalogeropoulos O."/>
            <person name="Pellenz S."/>
            <person name="Potier S."/>
            <person name="Richard G.-F."/>
            <person name="Straub M.-L."/>
            <person name="Suleau A."/>
            <person name="Swennen D."/>
            <person name="Tekaia F."/>
            <person name="Wesolowski-Louvel M."/>
            <person name="Westhof E."/>
            <person name="Wirth B."/>
            <person name="Zeniou-Meyer M."/>
            <person name="Zivanovic Y."/>
            <person name="Bolotin-Fukuhara M."/>
            <person name="Thierry A."/>
            <person name="Bouchier C."/>
            <person name="Caudron B."/>
            <person name="Scarpelli C."/>
            <person name="Gaillardin C."/>
            <person name="Weissenbach J."/>
            <person name="Wincker P."/>
            <person name="Souciet J.-L."/>
        </authorList>
    </citation>
    <scope>NUCLEOTIDE SEQUENCE [LARGE SCALE GENOMIC DNA]</scope>
    <source>
        <strain>ATCC 36239 / CBS 767 / BCRC 21394 / JCM 1990 / NBRC 0083 / IGC 2968</strain>
    </source>
</reference>
<accession>Q6BKI8</accession>
<protein>
    <recommendedName>
        <fullName evidence="1">Protein N-terminal and lysine N-methyltransferase EFM7</fullName>
        <ecNumber evidence="1">2.1.1.-</ecNumber>
    </recommendedName>
    <alternativeName>
        <fullName evidence="1">Elongation factor methyltransferase 7</fullName>
    </alternativeName>
</protein>
<evidence type="ECO:0000255" key="1">
    <source>
        <dbReference type="HAMAP-Rule" id="MF_03223"/>
    </source>
</evidence>
<keyword id="KW-0963">Cytoplasm</keyword>
<keyword id="KW-0489">Methyltransferase</keyword>
<keyword id="KW-1185">Reference proteome</keyword>
<keyword id="KW-0949">S-adenosyl-L-methionine</keyword>
<keyword id="KW-0808">Transferase</keyword>
<comment type="function">
    <text evidence="1">S-adenosyl-L-methionine-dependent protein methyltransferase that trimethylates the N-terminal glycine 'Gly-2' of elongation factor 1-alpha, before also catalyzing the mono- and dimethylation of 'Lys-3'.</text>
</comment>
<comment type="subcellular location">
    <subcellularLocation>
        <location evidence="1">Cytoplasm</location>
    </subcellularLocation>
</comment>
<comment type="similarity">
    <text evidence="1">Belongs to the class I-like SAM-binding methyltransferase superfamily. EFM7 family.</text>
</comment>